<comment type="function">
    <text evidence="1">Together with its co-chaperonin GroES, plays an essential role in assisting protein folding. The GroEL-GroES system forms a nano-cage that allows encapsulation of the non-native substrate proteins and provides a physical environment optimized to promote and accelerate protein folding.</text>
</comment>
<comment type="catalytic activity">
    <reaction evidence="1">
        <text>ATP + H2O + a folded polypeptide = ADP + phosphate + an unfolded polypeptide.</text>
        <dbReference type="EC" id="5.6.1.7"/>
    </reaction>
</comment>
<comment type="subunit">
    <text evidence="1">Forms a cylinder of 14 subunits composed of two heptameric rings stacked back-to-back. Interacts with the co-chaperonin GroES.</text>
</comment>
<comment type="subcellular location">
    <subcellularLocation>
        <location evidence="1">Cytoplasm</location>
    </subcellularLocation>
</comment>
<comment type="similarity">
    <text evidence="1">Belongs to the chaperonin (HSP60) family.</text>
</comment>
<comment type="sequence caution" evidence="3">
    <conflict type="erroneous initiation">
        <sequence resource="EMBL-CDS" id="ABV50147"/>
    </conflict>
</comment>
<name>CH601_PROM2</name>
<accession>A8G3G6</accession>
<reference key="1">
    <citation type="journal article" date="2007" name="PLoS Genet.">
        <title>Patterns and implications of gene gain and loss in the evolution of Prochlorococcus.</title>
        <authorList>
            <person name="Kettler G.C."/>
            <person name="Martiny A.C."/>
            <person name="Huang K."/>
            <person name="Zucker J."/>
            <person name="Coleman M.L."/>
            <person name="Rodrigue S."/>
            <person name="Chen F."/>
            <person name="Lapidus A."/>
            <person name="Ferriera S."/>
            <person name="Johnson J."/>
            <person name="Steglich C."/>
            <person name="Church G.M."/>
            <person name="Richardson P."/>
            <person name="Chisholm S.W."/>
        </authorList>
    </citation>
    <scope>NUCLEOTIDE SEQUENCE [LARGE SCALE GENOMIC DNA]</scope>
    <source>
        <strain>MIT 9215</strain>
    </source>
</reference>
<organism>
    <name type="scientific">Prochlorococcus marinus (strain MIT 9215)</name>
    <dbReference type="NCBI Taxonomy" id="93060"/>
    <lineage>
        <taxon>Bacteria</taxon>
        <taxon>Bacillati</taxon>
        <taxon>Cyanobacteriota</taxon>
        <taxon>Cyanophyceae</taxon>
        <taxon>Synechococcales</taxon>
        <taxon>Prochlorococcaceae</taxon>
        <taxon>Prochlorococcus</taxon>
    </lineage>
</organism>
<proteinExistence type="inferred from homology"/>
<protein>
    <recommendedName>
        <fullName evidence="1">Chaperonin GroEL 1</fullName>
        <ecNumber evidence="1">5.6.1.7</ecNumber>
    </recommendedName>
    <alternativeName>
        <fullName evidence="1">60 kDa chaperonin 1</fullName>
    </alternativeName>
    <alternativeName>
        <fullName evidence="1">Chaperonin-60 1</fullName>
        <shortName evidence="1">Cpn60 1</shortName>
    </alternativeName>
</protein>
<sequence>MAKQLSFSNESREALEKGVNFVANAVKVTIGPKAKNVVIDRKFGSPDIVSDGSTVAKEIEIENPISNLGAKLIEQVASKTKESAGDGTTTATILTQKMVQEGLKNIASGASPIELKKGMEVGLDFVLEKLSSKSISLSGSDIQKVATVSAGGDEEIGSIISKAMDIVTSDGVINVEESQSLDTELDITEGMSFDRGYSSPYFVTDQERQICELENPKILITDQKISTLVDLVPILEEIQKSGSPFLILAEDIEGEALTTLVLNKNSGVLNVASVRAPLFGERRKAALEDIAILTGAKLISEDKSMTLDKVSINDLGKAKKITITKDKTTIIAFEDTKDLVKARVEKLKREVDMTDSEYDQDKINERIAKLAGGVALIKVGAATETEMKYKKLRIEDSLNATKAAIEEGVVPGGGQTLIEISDDLLNLSQTSSDDLRTGINIIKEALLEPTKQIAKNAGFNGDVVIAEIKRLNKGFNANSGKYEDLKNSGILDPTKVIRLALQDSVSIAAMLLTTEVAIADIPEPEPAAPGGPSGDPMGGMGGMGMPGMGGMGMPGMGGMGMPGMGGMGMPGMGGMGMPGMM</sequence>
<feature type="chain" id="PRO_0000332040" description="Chaperonin GroEL 1">
    <location>
        <begin position="1"/>
        <end position="581"/>
    </location>
</feature>
<feature type="region of interest" description="Disordered" evidence="2">
    <location>
        <begin position="522"/>
        <end position="543"/>
    </location>
</feature>
<feature type="compositionally biased region" description="Gly residues" evidence="2">
    <location>
        <begin position="531"/>
        <end position="543"/>
    </location>
</feature>
<feature type="binding site" evidence="1">
    <location>
        <begin position="29"/>
        <end position="32"/>
    </location>
    <ligand>
        <name>ATP</name>
        <dbReference type="ChEBI" id="CHEBI:30616"/>
    </ligand>
</feature>
<feature type="binding site" evidence="1">
    <location>
        <begin position="86"/>
        <end position="90"/>
    </location>
    <ligand>
        <name>ATP</name>
        <dbReference type="ChEBI" id="CHEBI:30616"/>
    </ligand>
</feature>
<feature type="binding site" evidence="1">
    <location>
        <position position="413"/>
    </location>
    <ligand>
        <name>ATP</name>
        <dbReference type="ChEBI" id="CHEBI:30616"/>
    </ligand>
</feature>
<feature type="binding site" evidence="1">
    <location>
        <position position="492"/>
    </location>
    <ligand>
        <name>ATP</name>
        <dbReference type="ChEBI" id="CHEBI:30616"/>
    </ligand>
</feature>
<keyword id="KW-0067">ATP-binding</keyword>
<keyword id="KW-0143">Chaperone</keyword>
<keyword id="KW-0963">Cytoplasm</keyword>
<keyword id="KW-0413">Isomerase</keyword>
<keyword id="KW-0547">Nucleotide-binding</keyword>
<evidence type="ECO:0000255" key="1">
    <source>
        <dbReference type="HAMAP-Rule" id="MF_00600"/>
    </source>
</evidence>
<evidence type="ECO:0000256" key="2">
    <source>
        <dbReference type="SAM" id="MobiDB-lite"/>
    </source>
</evidence>
<evidence type="ECO:0000305" key="3"/>
<dbReference type="EC" id="5.6.1.7" evidence="1"/>
<dbReference type="EMBL" id="CP000825">
    <property type="protein sequence ID" value="ABV50147.1"/>
    <property type="status" value="ALT_INIT"/>
    <property type="molecule type" value="Genomic_DNA"/>
</dbReference>
<dbReference type="RefSeq" id="WP_041484443.1">
    <property type="nucleotide sequence ID" value="NC_009840.1"/>
</dbReference>
<dbReference type="SMR" id="A8G3G6"/>
<dbReference type="STRING" id="93060.P9215_05311"/>
<dbReference type="KEGG" id="pmh:P9215_05311"/>
<dbReference type="eggNOG" id="COG0459">
    <property type="taxonomic scope" value="Bacteria"/>
</dbReference>
<dbReference type="HOGENOM" id="CLU_016503_3_0_3"/>
<dbReference type="OrthoDB" id="9766614at2"/>
<dbReference type="Proteomes" id="UP000002014">
    <property type="component" value="Chromosome"/>
</dbReference>
<dbReference type="GO" id="GO:0005737">
    <property type="term" value="C:cytoplasm"/>
    <property type="evidence" value="ECO:0007669"/>
    <property type="project" value="UniProtKB-SubCell"/>
</dbReference>
<dbReference type="GO" id="GO:0005524">
    <property type="term" value="F:ATP binding"/>
    <property type="evidence" value="ECO:0007669"/>
    <property type="project" value="UniProtKB-UniRule"/>
</dbReference>
<dbReference type="GO" id="GO:0140662">
    <property type="term" value="F:ATP-dependent protein folding chaperone"/>
    <property type="evidence" value="ECO:0007669"/>
    <property type="project" value="InterPro"/>
</dbReference>
<dbReference type="GO" id="GO:0016853">
    <property type="term" value="F:isomerase activity"/>
    <property type="evidence" value="ECO:0007669"/>
    <property type="project" value="UniProtKB-KW"/>
</dbReference>
<dbReference type="GO" id="GO:0051082">
    <property type="term" value="F:unfolded protein binding"/>
    <property type="evidence" value="ECO:0007669"/>
    <property type="project" value="UniProtKB-UniRule"/>
</dbReference>
<dbReference type="GO" id="GO:0042026">
    <property type="term" value="P:protein refolding"/>
    <property type="evidence" value="ECO:0007669"/>
    <property type="project" value="UniProtKB-UniRule"/>
</dbReference>
<dbReference type="CDD" id="cd03344">
    <property type="entry name" value="GroEL"/>
    <property type="match status" value="1"/>
</dbReference>
<dbReference type="FunFam" id="3.50.7.10:FF:000001">
    <property type="entry name" value="60 kDa chaperonin"/>
    <property type="match status" value="1"/>
</dbReference>
<dbReference type="Gene3D" id="3.50.7.10">
    <property type="entry name" value="GroEL"/>
    <property type="match status" value="1"/>
</dbReference>
<dbReference type="Gene3D" id="1.10.560.10">
    <property type="entry name" value="GroEL-like equatorial domain"/>
    <property type="match status" value="1"/>
</dbReference>
<dbReference type="Gene3D" id="3.30.260.10">
    <property type="entry name" value="TCP-1-like chaperonin intermediate domain"/>
    <property type="match status" value="1"/>
</dbReference>
<dbReference type="HAMAP" id="MF_00600">
    <property type="entry name" value="CH60"/>
    <property type="match status" value="1"/>
</dbReference>
<dbReference type="InterPro" id="IPR018370">
    <property type="entry name" value="Chaperonin_Cpn60_CS"/>
</dbReference>
<dbReference type="InterPro" id="IPR001844">
    <property type="entry name" value="Cpn60/GroEL"/>
</dbReference>
<dbReference type="InterPro" id="IPR002423">
    <property type="entry name" value="Cpn60/GroEL/TCP-1"/>
</dbReference>
<dbReference type="InterPro" id="IPR027409">
    <property type="entry name" value="GroEL-like_apical_dom_sf"/>
</dbReference>
<dbReference type="InterPro" id="IPR027413">
    <property type="entry name" value="GROEL-like_equatorial_sf"/>
</dbReference>
<dbReference type="InterPro" id="IPR027410">
    <property type="entry name" value="TCP-1-like_intermed_sf"/>
</dbReference>
<dbReference type="NCBIfam" id="TIGR02348">
    <property type="entry name" value="GroEL"/>
    <property type="match status" value="1"/>
</dbReference>
<dbReference type="NCBIfam" id="NF000592">
    <property type="entry name" value="PRK00013.1"/>
    <property type="match status" value="1"/>
</dbReference>
<dbReference type="NCBIfam" id="NF009487">
    <property type="entry name" value="PRK12849.1"/>
    <property type="match status" value="1"/>
</dbReference>
<dbReference type="NCBIfam" id="NF009488">
    <property type="entry name" value="PRK12850.1"/>
    <property type="match status" value="1"/>
</dbReference>
<dbReference type="NCBIfam" id="NF009489">
    <property type="entry name" value="PRK12851.1"/>
    <property type="match status" value="1"/>
</dbReference>
<dbReference type="PANTHER" id="PTHR45633">
    <property type="entry name" value="60 KDA HEAT SHOCK PROTEIN, MITOCHONDRIAL"/>
    <property type="match status" value="1"/>
</dbReference>
<dbReference type="Pfam" id="PF00118">
    <property type="entry name" value="Cpn60_TCP1"/>
    <property type="match status" value="1"/>
</dbReference>
<dbReference type="PRINTS" id="PR00298">
    <property type="entry name" value="CHAPERONIN60"/>
</dbReference>
<dbReference type="SUPFAM" id="SSF52029">
    <property type="entry name" value="GroEL apical domain-like"/>
    <property type="match status" value="1"/>
</dbReference>
<dbReference type="SUPFAM" id="SSF48592">
    <property type="entry name" value="GroEL equatorial domain-like"/>
    <property type="match status" value="1"/>
</dbReference>
<dbReference type="SUPFAM" id="SSF54849">
    <property type="entry name" value="GroEL-intermediate domain like"/>
    <property type="match status" value="1"/>
</dbReference>
<dbReference type="PROSITE" id="PS00296">
    <property type="entry name" value="CHAPERONINS_CPN60"/>
    <property type="match status" value="1"/>
</dbReference>
<gene>
    <name evidence="1" type="primary">groEL1</name>
    <name evidence="1" type="synonym">groL1</name>
    <name type="ordered locus">P9215_05311</name>
</gene>